<organism>
    <name type="scientific">Xylella fastidiosa (strain Temecula1 / ATCC 700964)</name>
    <dbReference type="NCBI Taxonomy" id="183190"/>
    <lineage>
        <taxon>Bacteria</taxon>
        <taxon>Pseudomonadati</taxon>
        <taxon>Pseudomonadota</taxon>
        <taxon>Gammaproteobacteria</taxon>
        <taxon>Lysobacterales</taxon>
        <taxon>Lysobacteraceae</taxon>
        <taxon>Xylella</taxon>
    </lineage>
</organism>
<reference key="1">
    <citation type="journal article" date="2003" name="J. Bacteriol.">
        <title>Comparative analyses of the complete genome sequences of Pierce's disease and citrus variegated chlorosis strains of Xylella fastidiosa.</title>
        <authorList>
            <person name="Van Sluys M.A."/>
            <person name="de Oliveira M.C."/>
            <person name="Monteiro-Vitorello C.B."/>
            <person name="Miyaki C.Y."/>
            <person name="Furlan L.R."/>
            <person name="Camargo L.E.A."/>
            <person name="da Silva A.C.R."/>
            <person name="Moon D.H."/>
            <person name="Takita M.A."/>
            <person name="Lemos E.G.M."/>
            <person name="Machado M.A."/>
            <person name="Ferro M.I.T."/>
            <person name="da Silva F.R."/>
            <person name="Goldman M.H.S."/>
            <person name="Goldman G.H."/>
            <person name="Lemos M.V.F."/>
            <person name="El-Dorry H."/>
            <person name="Tsai S.M."/>
            <person name="Carrer H."/>
            <person name="Carraro D.M."/>
            <person name="de Oliveira R.C."/>
            <person name="Nunes L.R."/>
            <person name="Siqueira W.J."/>
            <person name="Coutinho L.L."/>
            <person name="Kimura E.T."/>
            <person name="Ferro E.S."/>
            <person name="Harakava R."/>
            <person name="Kuramae E.E."/>
            <person name="Marino C.L."/>
            <person name="Giglioti E."/>
            <person name="Abreu I.L."/>
            <person name="Alves L.M.C."/>
            <person name="do Amaral A.M."/>
            <person name="Baia G.S."/>
            <person name="Blanco S.R."/>
            <person name="Brito M.S."/>
            <person name="Cannavan F.S."/>
            <person name="Celestino A.V."/>
            <person name="da Cunha A.F."/>
            <person name="Fenille R.C."/>
            <person name="Ferro J.A."/>
            <person name="Formighieri E.F."/>
            <person name="Kishi L.T."/>
            <person name="Leoni S.G."/>
            <person name="Oliveira A.R."/>
            <person name="Rosa V.E. Jr."/>
            <person name="Sassaki F.T."/>
            <person name="Sena J.A.D."/>
            <person name="de Souza A.A."/>
            <person name="Truffi D."/>
            <person name="Tsukumo F."/>
            <person name="Yanai G.M."/>
            <person name="Zaros L.G."/>
            <person name="Civerolo E.L."/>
            <person name="Simpson A.J.G."/>
            <person name="Almeida N.F. Jr."/>
            <person name="Setubal J.C."/>
            <person name="Kitajima J.P."/>
        </authorList>
    </citation>
    <scope>NUCLEOTIDE SEQUENCE [LARGE SCALE GENOMIC DNA]</scope>
    <source>
        <strain>Temecula1 / ATCC 700964</strain>
    </source>
</reference>
<protein>
    <recommendedName>
        <fullName evidence="1">Anhydro-N-acetylmuramic acid kinase</fullName>
        <ecNumber evidence="1">2.7.1.170</ecNumber>
    </recommendedName>
    <alternativeName>
        <fullName evidence="1">AnhMurNAc kinase</fullName>
    </alternativeName>
</protein>
<accession>Q87F08</accession>
<feature type="chain" id="PRO_0000250090" description="Anhydro-N-acetylmuramic acid kinase">
    <location>
        <begin position="1"/>
        <end position="381"/>
    </location>
</feature>
<feature type="binding site" evidence="1">
    <location>
        <begin position="22"/>
        <end position="29"/>
    </location>
    <ligand>
        <name>ATP</name>
        <dbReference type="ChEBI" id="CHEBI:30616"/>
    </ligand>
</feature>
<proteinExistence type="inferred from homology"/>
<comment type="function">
    <text evidence="1">Catalyzes the specific phosphorylation of 1,6-anhydro-N-acetylmuramic acid (anhMurNAc) with the simultaneous cleavage of the 1,6-anhydro ring, generating MurNAc-6-P. Is required for the utilization of anhMurNAc either imported from the medium or derived from its own cell wall murein, and thus plays a role in cell wall recycling.</text>
</comment>
<comment type="catalytic activity">
    <reaction evidence="1">
        <text>1,6-anhydro-N-acetyl-beta-muramate + ATP + H2O = N-acetyl-D-muramate 6-phosphate + ADP + H(+)</text>
        <dbReference type="Rhea" id="RHEA:24952"/>
        <dbReference type="ChEBI" id="CHEBI:15377"/>
        <dbReference type="ChEBI" id="CHEBI:15378"/>
        <dbReference type="ChEBI" id="CHEBI:30616"/>
        <dbReference type="ChEBI" id="CHEBI:58690"/>
        <dbReference type="ChEBI" id="CHEBI:58722"/>
        <dbReference type="ChEBI" id="CHEBI:456216"/>
        <dbReference type="EC" id="2.7.1.170"/>
    </reaction>
</comment>
<comment type="pathway">
    <text evidence="1">Amino-sugar metabolism; 1,6-anhydro-N-acetylmuramate degradation.</text>
</comment>
<comment type="pathway">
    <text evidence="1">Cell wall biogenesis; peptidoglycan recycling.</text>
</comment>
<comment type="similarity">
    <text evidence="1">Belongs to the anhydro-N-acetylmuramic acid kinase family.</text>
</comment>
<keyword id="KW-0067">ATP-binding</keyword>
<keyword id="KW-0119">Carbohydrate metabolism</keyword>
<keyword id="KW-0418">Kinase</keyword>
<keyword id="KW-0547">Nucleotide-binding</keyword>
<keyword id="KW-1185">Reference proteome</keyword>
<keyword id="KW-0808">Transferase</keyword>
<dbReference type="EC" id="2.7.1.170" evidence="1"/>
<dbReference type="EMBL" id="AE009442">
    <property type="protein sequence ID" value="AAO28029.1"/>
    <property type="molecule type" value="Genomic_DNA"/>
</dbReference>
<dbReference type="RefSeq" id="WP_004087784.1">
    <property type="nucleotide sequence ID" value="NC_004556.1"/>
</dbReference>
<dbReference type="SMR" id="Q87F08"/>
<dbReference type="KEGG" id="xft:PD_0130"/>
<dbReference type="HOGENOM" id="CLU_038782_0_0_6"/>
<dbReference type="UniPathway" id="UPA00343"/>
<dbReference type="UniPathway" id="UPA00544"/>
<dbReference type="Proteomes" id="UP000002516">
    <property type="component" value="Chromosome"/>
</dbReference>
<dbReference type="GO" id="GO:0005524">
    <property type="term" value="F:ATP binding"/>
    <property type="evidence" value="ECO:0007669"/>
    <property type="project" value="UniProtKB-UniRule"/>
</dbReference>
<dbReference type="GO" id="GO:0016301">
    <property type="term" value="F:kinase activity"/>
    <property type="evidence" value="ECO:0007669"/>
    <property type="project" value="UniProtKB-KW"/>
</dbReference>
<dbReference type="GO" id="GO:0016773">
    <property type="term" value="F:phosphotransferase activity, alcohol group as acceptor"/>
    <property type="evidence" value="ECO:0007669"/>
    <property type="project" value="UniProtKB-UniRule"/>
</dbReference>
<dbReference type="GO" id="GO:0097175">
    <property type="term" value="P:1,6-anhydro-N-acetyl-beta-muramic acid catabolic process"/>
    <property type="evidence" value="ECO:0007669"/>
    <property type="project" value="UniProtKB-UniRule"/>
</dbReference>
<dbReference type="GO" id="GO:0006040">
    <property type="term" value="P:amino sugar metabolic process"/>
    <property type="evidence" value="ECO:0007669"/>
    <property type="project" value="InterPro"/>
</dbReference>
<dbReference type="GO" id="GO:0009254">
    <property type="term" value="P:peptidoglycan turnover"/>
    <property type="evidence" value="ECO:0007669"/>
    <property type="project" value="UniProtKB-UniRule"/>
</dbReference>
<dbReference type="CDD" id="cd24050">
    <property type="entry name" value="ASKHA_NBD_ANMK"/>
    <property type="match status" value="1"/>
</dbReference>
<dbReference type="Gene3D" id="3.30.420.40">
    <property type="match status" value="2"/>
</dbReference>
<dbReference type="HAMAP" id="MF_01270">
    <property type="entry name" value="AnhMurNAc_kinase"/>
    <property type="match status" value="1"/>
</dbReference>
<dbReference type="InterPro" id="IPR005338">
    <property type="entry name" value="Anhydro_N_Ac-Mur_kinase"/>
</dbReference>
<dbReference type="InterPro" id="IPR043129">
    <property type="entry name" value="ATPase_NBD"/>
</dbReference>
<dbReference type="NCBIfam" id="NF007139">
    <property type="entry name" value="PRK09585.1-3"/>
    <property type="match status" value="1"/>
</dbReference>
<dbReference type="NCBIfam" id="NF007148">
    <property type="entry name" value="PRK09585.3-2"/>
    <property type="match status" value="1"/>
</dbReference>
<dbReference type="PANTHER" id="PTHR30605">
    <property type="entry name" value="ANHYDRO-N-ACETYLMURAMIC ACID KINASE"/>
    <property type="match status" value="1"/>
</dbReference>
<dbReference type="PANTHER" id="PTHR30605:SF0">
    <property type="entry name" value="ANHYDRO-N-ACETYLMURAMIC ACID KINASE"/>
    <property type="match status" value="1"/>
</dbReference>
<dbReference type="Pfam" id="PF03702">
    <property type="entry name" value="AnmK"/>
    <property type="match status" value="1"/>
</dbReference>
<dbReference type="SUPFAM" id="SSF53067">
    <property type="entry name" value="Actin-like ATPase domain"/>
    <property type="match status" value="1"/>
</dbReference>
<gene>
    <name evidence="1" type="primary">anmK</name>
    <name type="ordered locus">PD_0130</name>
</gene>
<evidence type="ECO:0000255" key="1">
    <source>
        <dbReference type="HAMAP-Rule" id="MF_01270"/>
    </source>
</evidence>
<name>ANMK_XYLFT</name>
<sequence length="381" mass="40784">MPVHDDHCNPNPAPLYLGLMSGTSIDGIDAALVRINANPITHCELIAAQTSAWDPNLRTTLLELSQGQNTASLDQLGWLDAQVGLAFATAANTLIAKTGIKHTQIRAIGSHGQTIRHRPHGDLPFTWQLGDAHRIAELTGITTVADFRRRDVAAGGQGAPLMPAFHLAILGSANENRAVLNLGGIANLTLIPMTGPVLGFDTGPANALLDSWYQRHHHETFDQSGNFAASGKINQKLLACLLDDPWFTLPPPKSTGREQFHLDWMTKQLEPTPPSPADVQATLLELTAVTVADALLRQQPKTTRLLICGGGAHNPVLMARLATHLPNVTVESIQTYGLNPDYLEAMGFAWLAAQTLDGQPSNLPSVTGARGLRLLGAIHPA</sequence>